<dbReference type="EC" id="2.7.1.148" evidence="1"/>
<dbReference type="EMBL" id="CP000736">
    <property type="protein sequence ID" value="ABR51387.1"/>
    <property type="molecule type" value="Genomic_DNA"/>
</dbReference>
<dbReference type="SMR" id="A6TYW9"/>
<dbReference type="KEGG" id="sah:SaurJH1_0529"/>
<dbReference type="HOGENOM" id="CLU_053057_1_1_9"/>
<dbReference type="GO" id="GO:0050515">
    <property type="term" value="F:4-(cytidine 5'-diphospho)-2-C-methyl-D-erythritol kinase activity"/>
    <property type="evidence" value="ECO:0007669"/>
    <property type="project" value="UniProtKB-UniRule"/>
</dbReference>
<dbReference type="GO" id="GO:0005524">
    <property type="term" value="F:ATP binding"/>
    <property type="evidence" value="ECO:0007669"/>
    <property type="project" value="UniProtKB-UniRule"/>
</dbReference>
<dbReference type="GO" id="GO:0016114">
    <property type="term" value="P:terpenoid biosynthetic process"/>
    <property type="evidence" value="ECO:0007669"/>
    <property type="project" value="InterPro"/>
</dbReference>
<dbReference type="FunFam" id="3.30.230.10:FF:000029">
    <property type="entry name" value="4-diphosphocytidyl-2-C-methyl-D-erythritol kinase"/>
    <property type="match status" value="1"/>
</dbReference>
<dbReference type="FunFam" id="3.30.70.890:FF:000006">
    <property type="entry name" value="4-diphosphocytidyl-2-C-methyl-D-erythritol kinase"/>
    <property type="match status" value="1"/>
</dbReference>
<dbReference type="Gene3D" id="3.30.230.10">
    <property type="match status" value="1"/>
</dbReference>
<dbReference type="Gene3D" id="3.30.70.890">
    <property type="entry name" value="GHMP kinase, C-terminal domain"/>
    <property type="match status" value="1"/>
</dbReference>
<dbReference type="HAMAP" id="MF_00061">
    <property type="entry name" value="IspE"/>
    <property type="match status" value="1"/>
</dbReference>
<dbReference type="InterPro" id="IPR013750">
    <property type="entry name" value="GHMP_kinase_C_dom"/>
</dbReference>
<dbReference type="InterPro" id="IPR036554">
    <property type="entry name" value="GHMP_kinase_C_sf"/>
</dbReference>
<dbReference type="InterPro" id="IPR006204">
    <property type="entry name" value="GHMP_kinase_N_dom"/>
</dbReference>
<dbReference type="InterPro" id="IPR004424">
    <property type="entry name" value="IspE"/>
</dbReference>
<dbReference type="InterPro" id="IPR020568">
    <property type="entry name" value="Ribosomal_Su5_D2-typ_SF"/>
</dbReference>
<dbReference type="InterPro" id="IPR014721">
    <property type="entry name" value="Ribsml_uS5_D2-typ_fold_subgr"/>
</dbReference>
<dbReference type="NCBIfam" id="TIGR00154">
    <property type="entry name" value="ispE"/>
    <property type="match status" value="1"/>
</dbReference>
<dbReference type="PANTHER" id="PTHR43527">
    <property type="entry name" value="4-DIPHOSPHOCYTIDYL-2-C-METHYL-D-ERYTHRITOL KINASE, CHLOROPLASTIC"/>
    <property type="match status" value="1"/>
</dbReference>
<dbReference type="PANTHER" id="PTHR43527:SF2">
    <property type="entry name" value="4-DIPHOSPHOCYTIDYL-2-C-METHYL-D-ERYTHRITOL KINASE, CHLOROPLASTIC"/>
    <property type="match status" value="1"/>
</dbReference>
<dbReference type="Pfam" id="PF08544">
    <property type="entry name" value="GHMP_kinases_C"/>
    <property type="match status" value="1"/>
</dbReference>
<dbReference type="Pfam" id="PF00288">
    <property type="entry name" value="GHMP_kinases_N"/>
    <property type="match status" value="1"/>
</dbReference>
<dbReference type="PIRSF" id="PIRSF010376">
    <property type="entry name" value="IspE"/>
    <property type="match status" value="1"/>
</dbReference>
<dbReference type="SUPFAM" id="SSF55060">
    <property type="entry name" value="GHMP Kinase, C-terminal domain"/>
    <property type="match status" value="1"/>
</dbReference>
<dbReference type="SUPFAM" id="SSF54211">
    <property type="entry name" value="Ribosomal protein S5 domain 2-like"/>
    <property type="match status" value="1"/>
</dbReference>
<accession>A6TYW9</accession>
<proteinExistence type="inferred from homology"/>
<sequence>MIYETAPAKINFTLDTLFKRNDGYHEIEMIMTTVDLNDRLTFHKRKDRKIVVEIEHNYVPSNHKNLAYRAAQLFIEQYQLKQGVTISIDKEIPVSAGLAGGSADAAATLRGLNRLFDIGASLEELALLGSKIGTDIPFCIYNKTALCTGRGEKIEFLNKPPSAWVILAKPNLGISSPDIFKLINLDKRYDVHTKMCYEALENRDYQQLCQSLSNRLEPISVSKHPQIDKLKNNMLKSGADGALMSGSGPTVYGLARKESQAKNIYNAVNGCCNEVYLVRLLG</sequence>
<gene>
    <name type="ordered locus">SaurJH1_0529</name>
</gene>
<reference key="1">
    <citation type="submission" date="2007-06" db="EMBL/GenBank/DDBJ databases">
        <title>Complete sequence of chromosome of Staphylococcus aureus subsp. aureus JH1.</title>
        <authorList>
            <consortium name="US DOE Joint Genome Institute"/>
            <person name="Copeland A."/>
            <person name="Lucas S."/>
            <person name="Lapidus A."/>
            <person name="Barry K."/>
            <person name="Detter J.C."/>
            <person name="Glavina del Rio T."/>
            <person name="Hammon N."/>
            <person name="Israni S."/>
            <person name="Dalin E."/>
            <person name="Tice H."/>
            <person name="Pitluck S."/>
            <person name="Chain P."/>
            <person name="Malfatti S."/>
            <person name="Shin M."/>
            <person name="Vergez L."/>
            <person name="Schmutz J."/>
            <person name="Larimer F."/>
            <person name="Land M."/>
            <person name="Hauser L."/>
            <person name="Kyrpides N."/>
            <person name="Ivanova N."/>
            <person name="Tomasz A."/>
            <person name="Richardson P."/>
        </authorList>
    </citation>
    <scope>NUCLEOTIDE SEQUENCE [LARGE SCALE GENOMIC DNA]</scope>
    <source>
        <strain>JH1</strain>
    </source>
</reference>
<protein>
    <recommendedName>
        <fullName evidence="1">Putative 4-diphosphocytidyl-2-C-methyl-D-erythritol kinase</fullName>
        <shortName evidence="1">CMK</shortName>
        <ecNumber evidence="1">2.7.1.148</ecNumber>
    </recommendedName>
    <alternativeName>
        <fullName evidence="1">4-(cytidine-5'-diphospho)-2-C-methyl-D-erythritol kinase</fullName>
    </alternativeName>
</protein>
<feature type="chain" id="PRO_1000075062" description="Putative 4-diphosphocytidyl-2-C-methyl-D-erythritol kinase">
    <location>
        <begin position="1"/>
        <end position="282"/>
    </location>
</feature>
<feature type="active site" evidence="1">
    <location>
        <position position="9"/>
    </location>
</feature>
<feature type="active site" evidence="1">
    <location>
        <position position="135"/>
    </location>
</feature>
<feature type="binding site" evidence="1">
    <location>
        <begin position="93"/>
        <end position="103"/>
    </location>
    <ligand>
        <name>ATP</name>
        <dbReference type="ChEBI" id="CHEBI:30616"/>
    </ligand>
</feature>
<comment type="function">
    <text evidence="1">Catalyzes the phosphorylation of the position 2 hydroxy group of 4-diphosphocytidyl-2C-methyl-D-erythritol.</text>
</comment>
<comment type="catalytic activity">
    <reaction evidence="1">
        <text>4-CDP-2-C-methyl-D-erythritol + ATP = 4-CDP-2-C-methyl-D-erythritol 2-phosphate + ADP + H(+)</text>
        <dbReference type="Rhea" id="RHEA:18437"/>
        <dbReference type="ChEBI" id="CHEBI:15378"/>
        <dbReference type="ChEBI" id="CHEBI:30616"/>
        <dbReference type="ChEBI" id="CHEBI:57823"/>
        <dbReference type="ChEBI" id="CHEBI:57919"/>
        <dbReference type="ChEBI" id="CHEBI:456216"/>
        <dbReference type="EC" id="2.7.1.148"/>
    </reaction>
</comment>
<comment type="similarity">
    <text evidence="1">Belongs to the GHMP kinase family. IspE subfamily.</text>
</comment>
<keyword id="KW-0067">ATP-binding</keyword>
<keyword id="KW-0418">Kinase</keyword>
<keyword id="KW-0547">Nucleotide-binding</keyword>
<keyword id="KW-0808">Transferase</keyword>
<organism>
    <name type="scientific">Staphylococcus aureus (strain JH1)</name>
    <dbReference type="NCBI Taxonomy" id="359787"/>
    <lineage>
        <taxon>Bacteria</taxon>
        <taxon>Bacillati</taxon>
        <taxon>Bacillota</taxon>
        <taxon>Bacilli</taxon>
        <taxon>Bacillales</taxon>
        <taxon>Staphylococcaceae</taxon>
        <taxon>Staphylococcus</taxon>
    </lineage>
</organism>
<evidence type="ECO:0000255" key="1">
    <source>
        <dbReference type="HAMAP-Rule" id="MF_00061"/>
    </source>
</evidence>
<name>ISPE_STAA2</name>